<sequence>MLGRDIESDWIGNYWGRDHSLALNTFSKMSIEKEGVLYQKDFFVPYDGLVEELPEHSIEIPEIMGQDLLNDRLNSVEDVQSSYYGRLMPGLNIDLSMPTFPVSNELPVRLSSPIQMNLSTSMPNPTIEQLHSKTKSYVSQNPVNMVGSLSGSPPTDCHSPGGNSNTCGTLKTRALSLSPVSSDTAAKKKSPSRSGSSSSGIKRPLNSFMLYRRDKQSSIPTNNHQSISRIIGEMWKRETIEEKERYAEMAQRERERHAKEYPDYKFLPRKKKDRSTSGKSPRRRKTFDPSLEQDESKVLRMMLNQISHKKSQSDAEKFKLDQYSWLLSEEGNYDSQKGAFDIICQANTNSSQTGLPHSNQPSEISFIPGIYTAPNSVPLPIFPVKNKVEKVDTHNSLDGYLHTFDNLSDYEFRSLINNHSTPSVNDSRLGTSFNKSCTDSPQSISIYDDIKNLDIFSEKKETPNVSLVPTFDSTIFQDDSAYGYDNFTGIWDDPSYRLPVF</sequence>
<evidence type="ECO:0000255" key="1">
    <source>
        <dbReference type="PROSITE-ProRule" id="PRU00267"/>
    </source>
</evidence>
<evidence type="ECO:0000256" key="2">
    <source>
        <dbReference type="SAM" id="MobiDB-lite"/>
    </source>
</evidence>
<evidence type="ECO:0000269" key="3">
    <source>
    </source>
</evidence>
<evidence type="ECO:0000305" key="4"/>
<evidence type="ECO:0000312" key="5">
    <source>
        <dbReference type="EMBL" id="AAP13349.1"/>
    </source>
</evidence>
<dbReference type="EMBL" id="AY257481">
    <property type="protein sequence ID" value="AAP13349.1"/>
    <property type="molecule type" value="mRNA"/>
</dbReference>
<dbReference type="SMR" id="Q870J1"/>
<dbReference type="VEuPathDB" id="FungiDB:T552_02504"/>
<dbReference type="GO" id="GO:0005634">
    <property type="term" value="C:nucleus"/>
    <property type="evidence" value="ECO:0007669"/>
    <property type="project" value="UniProtKB-SubCell"/>
</dbReference>
<dbReference type="GO" id="GO:0003677">
    <property type="term" value="F:DNA binding"/>
    <property type="evidence" value="ECO:0000303"/>
    <property type="project" value="UniProtKB"/>
</dbReference>
<dbReference type="GO" id="GO:0000981">
    <property type="term" value="F:DNA-binding transcription factor activity, RNA polymerase II-specific"/>
    <property type="evidence" value="ECO:0007669"/>
    <property type="project" value="TreeGrafter"/>
</dbReference>
<dbReference type="GO" id="GO:0000978">
    <property type="term" value="F:RNA polymerase II cis-regulatory region sequence-specific DNA binding"/>
    <property type="evidence" value="ECO:0007669"/>
    <property type="project" value="TreeGrafter"/>
</dbReference>
<dbReference type="GO" id="GO:0000750">
    <property type="term" value="P:pheromone-dependent signal transduction involved in conjugation with cellular fusion"/>
    <property type="evidence" value="ECO:0000303"/>
    <property type="project" value="UniProtKB"/>
</dbReference>
<dbReference type="GO" id="GO:0006355">
    <property type="term" value="P:regulation of DNA-templated transcription"/>
    <property type="evidence" value="ECO:0000303"/>
    <property type="project" value="UniProtKB"/>
</dbReference>
<dbReference type="CDD" id="cd01389">
    <property type="entry name" value="HMG-box_ROX1-like"/>
    <property type="match status" value="1"/>
</dbReference>
<dbReference type="Gene3D" id="1.10.30.10">
    <property type="entry name" value="High mobility group box domain"/>
    <property type="match status" value="1"/>
</dbReference>
<dbReference type="InterPro" id="IPR009071">
    <property type="entry name" value="HMG_box_dom"/>
</dbReference>
<dbReference type="InterPro" id="IPR036910">
    <property type="entry name" value="HMG_box_dom_sf"/>
</dbReference>
<dbReference type="InterPro" id="IPR051356">
    <property type="entry name" value="SOX/SOX-like_TF"/>
</dbReference>
<dbReference type="PANTHER" id="PTHR45789">
    <property type="entry name" value="FI18025P1"/>
    <property type="match status" value="1"/>
</dbReference>
<dbReference type="PANTHER" id="PTHR45789:SF2">
    <property type="entry name" value="FI18025P1"/>
    <property type="match status" value="1"/>
</dbReference>
<dbReference type="Pfam" id="PF00505">
    <property type="entry name" value="HMG_box"/>
    <property type="match status" value="1"/>
</dbReference>
<dbReference type="SMART" id="SM00398">
    <property type="entry name" value="HMG"/>
    <property type="match status" value="1"/>
</dbReference>
<dbReference type="SUPFAM" id="SSF47095">
    <property type="entry name" value="HMG-box"/>
    <property type="match status" value="1"/>
</dbReference>
<dbReference type="PROSITE" id="PS50118">
    <property type="entry name" value="HMG_BOX_2"/>
    <property type="match status" value="1"/>
</dbReference>
<protein>
    <recommendedName>
        <fullName>HMG-box protein STE11</fullName>
    </recommendedName>
</protein>
<comment type="subcellular location">
    <subcellularLocation>
        <location evidence="4">Nucleus</location>
    </subcellularLocation>
</comment>
<comment type="PTM">
    <text evidence="3">Phosphorylated by MAPK2.</text>
</comment>
<organism>
    <name type="scientific">Pneumocystis carinii</name>
    <dbReference type="NCBI Taxonomy" id="4754"/>
    <lineage>
        <taxon>Eukaryota</taxon>
        <taxon>Fungi</taxon>
        <taxon>Dikarya</taxon>
        <taxon>Ascomycota</taxon>
        <taxon>Taphrinomycotina</taxon>
        <taxon>Pneumocystomycetes</taxon>
        <taxon>Pneumocystaceae</taxon>
        <taxon>Pneumocystis</taxon>
    </lineage>
</organism>
<feature type="chain" id="PRO_0000247726" description="HMG-box protein STE11">
    <location>
        <begin position="1"/>
        <end position="501"/>
    </location>
</feature>
<feature type="DNA-binding region" description="HMG box" evidence="1">
    <location>
        <begin position="201"/>
        <end position="265"/>
    </location>
</feature>
<feature type="region of interest" description="Disordered" evidence="2">
    <location>
        <begin position="142"/>
        <end position="205"/>
    </location>
</feature>
<feature type="region of interest" description="Disordered" evidence="2">
    <location>
        <begin position="246"/>
        <end position="293"/>
    </location>
</feature>
<feature type="compositionally biased region" description="Polar residues" evidence="2">
    <location>
        <begin position="142"/>
        <end position="153"/>
    </location>
</feature>
<feature type="compositionally biased region" description="Low complexity" evidence="2">
    <location>
        <begin position="192"/>
        <end position="204"/>
    </location>
</feature>
<feature type="compositionally biased region" description="Basic and acidic residues" evidence="2">
    <location>
        <begin position="246"/>
        <end position="263"/>
    </location>
</feature>
<name>STE11_PNECA</name>
<keyword id="KW-0238">DNA-binding</keyword>
<keyword id="KW-0539">Nucleus</keyword>
<keyword id="KW-0597">Phosphoprotein</keyword>
<accession>Q870J1</accession>
<reference evidence="4 5" key="1">
    <citation type="journal article" date="2003" name="Gene">
        <title>Pneumocystis carinii STE11, an HMG-box protein, is phosphorylated by the mitogen activated protein kinase PCM.</title>
        <authorList>
            <person name="Vohra P.K."/>
            <person name="Puri V."/>
            <person name="Kottom T.J."/>
            <person name="Limper A.H."/>
            <person name="Thomas C.F. Jr."/>
        </authorList>
    </citation>
    <scope>NUCLEOTIDE SEQUENCE [MRNA]</scope>
    <scope>PHOSPHORYLATION</scope>
</reference>
<proteinExistence type="evidence at protein level"/>